<reference key="1">
    <citation type="journal article" date="2005" name="Nucleic Acids Res.">
        <title>Genome dynamics and diversity of Shigella species, the etiologic agents of bacillary dysentery.</title>
        <authorList>
            <person name="Yang F."/>
            <person name="Yang J."/>
            <person name="Zhang X."/>
            <person name="Chen L."/>
            <person name="Jiang Y."/>
            <person name="Yan Y."/>
            <person name="Tang X."/>
            <person name="Wang J."/>
            <person name="Xiong Z."/>
            <person name="Dong J."/>
            <person name="Xue Y."/>
            <person name="Zhu Y."/>
            <person name="Xu X."/>
            <person name="Sun L."/>
            <person name="Chen S."/>
            <person name="Nie H."/>
            <person name="Peng J."/>
            <person name="Xu J."/>
            <person name="Wang Y."/>
            <person name="Yuan Z."/>
            <person name="Wen Y."/>
            <person name="Yao Z."/>
            <person name="Shen Y."/>
            <person name="Qiang B."/>
            <person name="Hou Y."/>
            <person name="Yu J."/>
            <person name="Jin Q."/>
        </authorList>
    </citation>
    <scope>NUCLEOTIDE SEQUENCE [LARGE SCALE GENOMIC DNA]</scope>
    <source>
        <strain>Sd197</strain>
    </source>
</reference>
<proteinExistence type="inferred from homology"/>
<sequence length="105" mass="11841">MIASKFGIGQQVRHSLLGYLGVVVDIDPVYSLSEPSPDELAVNDELRAAPWYHVVMEDDNGLPVHTYLAEAQLSSELQDERPEQPSMDELAQTIRKQRQAPRLRN</sequence>
<name>HSPQ_SHIDS</name>
<dbReference type="EMBL" id="CP000034">
    <property type="protein sequence ID" value="ABB61115.1"/>
    <property type="status" value="ALT_INIT"/>
    <property type="molecule type" value="Genomic_DNA"/>
</dbReference>
<dbReference type="RefSeq" id="WP_005020298.1">
    <property type="nucleotide sequence ID" value="NC_007606.1"/>
</dbReference>
<dbReference type="RefSeq" id="YP_402606.1">
    <property type="nucleotide sequence ID" value="NC_007606.1"/>
</dbReference>
<dbReference type="SMR" id="Q32HU0"/>
<dbReference type="STRING" id="300267.SDY_0941"/>
<dbReference type="EnsemblBacteria" id="ABB61115">
    <property type="protein sequence ID" value="ABB61115"/>
    <property type="gene ID" value="SDY_0941"/>
</dbReference>
<dbReference type="KEGG" id="sdy:SDY_0941"/>
<dbReference type="PATRIC" id="fig|300267.13.peg.1089"/>
<dbReference type="HOGENOM" id="CLU_123865_1_0_6"/>
<dbReference type="Proteomes" id="UP000002716">
    <property type="component" value="Chromosome"/>
</dbReference>
<dbReference type="GO" id="GO:0005737">
    <property type="term" value="C:cytoplasm"/>
    <property type="evidence" value="ECO:0007669"/>
    <property type="project" value="UniProtKB-SubCell"/>
</dbReference>
<dbReference type="GO" id="GO:0003677">
    <property type="term" value="F:DNA binding"/>
    <property type="evidence" value="ECO:0007669"/>
    <property type="project" value="InterPro"/>
</dbReference>
<dbReference type="GO" id="GO:0009408">
    <property type="term" value="P:response to heat"/>
    <property type="evidence" value="ECO:0007669"/>
    <property type="project" value="UniProtKB-UniRule"/>
</dbReference>
<dbReference type="Gene3D" id="2.30.30.390">
    <property type="entry name" value="Hemimethylated DNA-binding domain"/>
    <property type="match status" value="1"/>
</dbReference>
<dbReference type="HAMAP" id="MF_01194">
    <property type="entry name" value="HspQ"/>
    <property type="match status" value="1"/>
</dbReference>
<dbReference type="InterPro" id="IPR011722">
    <property type="entry name" value="Hemimethylated_DNA-bd_dom"/>
</dbReference>
<dbReference type="InterPro" id="IPR036623">
    <property type="entry name" value="Hemimethylated_DNA-bd_sf"/>
</dbReference>
<dbReference type="InterPro" id="IPR022866">
    <property type="entry name" value="HspQ"/>
</dbReference>
<dbReference type="NCBIfam" id="NF010729">
    <property type="entry name" value="PRK14129.1"/>
    <property type="match status" value="1"/>
</dbReference>
<dbReference type="NCBIfam" id="TIGR02097">
    <property type="entry name" value="yccV"/>
    <property type="match status" value="1"/>
</dbReference>
<dbReference type="Pfam" id="PF08755">
    <property type="entry name" value="YccV-like"/>
    <property type="match status" value="1"/>
</dbReference>
<dbReference type="SMART" id="SM00992">
    <property type="entry name" value="YccV-like"/>
    <property type="match status" value="1"/>
</dbReference>
<dbReference type="SUPFAM" id="SSF141255">
    <property type="entry name" value="YccV-like"/>
    <property type="match status" value="1"/>
</dbReference>
<protein>
    <recommendedName>
        <fullName evidence="1">Heat shock protein HspQ</fullName>
    </recommendedName>
</protein>
<comment type="function">
    <text evidence="1">Involved in the degradation of certain denaturated proteins, including DnaA, during heat shock stress.</text>
</comment>
<comment type="subcellular location">
    <subcellularLocation>
        <location evidence="1">Cytoplasm</location>
    </subcellularLocation>
</comment>
<comment type="similarity">
    <text evidence="1">Belongs to the HspQ family.</text>
</comment>
<comment type="sequence caution" evidence="3">
    <conflict type="erroneous initiation">
        <sequence resource="EMBL-CDS" id="ABB61115"/>
    </conflict>
</comment>
<evidence type="ECO:0000255" key="1">
    <source>
        <dbReference type="HAMAP-Rule" id="MF_01194"/>
    </source>
</evidence>
<evidence type="ECO:0000256" key="2">
    <source>
        <dbReference type="SAM" id="MobiDB-lite"/>
    </source>
</evidence>
<evidence type="ECO:0000305" key="3"/>
<feature type="chain" id="PRO_0000315314" description="Heat shock protein HspQ">
    <location>
        <begin position="1"/>
        <end position="105"/>
    </location>
</feature>
<feature type="region of interest" description="Disordered" evidence="2">
    <location>
        <begin position="74"/>
        <end position="105"/>
    </location>
</feature>
<feature type="compositionally biased region" description="Basic residues" evidence="2">
    <location>
        <begin position="95"/>
        <end position="105"/>
    </location>
</feature>
<accession>Q32HU0</accession>
<gene>
    <name evidence="1" type="primary">hspQ</name>
    <name type="ordered locus">SDY_0941</name>
</gene>
<keyword id="KW-0963">Cytoplasm</keyword>
<keyword id="KW-1185">Reference proteome</keyword>
<keyword id="KW-0346">Stress response</keyword>
<organism>
    <name type="scientific">Shigella dysenteriae serotype 1 (strain Sd197)</name>
    <dbReference type="NCBI Taxonomy" id="300267"/>
    <lineage>
        <taxon>Bacteria</taxon>
        <taxon>Pseudomonadati</taxon>
        <taxon>Pseudomonadota</taxon>
        <taxon>Gammaproteobacteria</taxon>
        <taxon>Enterobacterales</taxon>
        <taxon>Enterobacteriaceae</taxon>
        <taxon>Shigella</taxon>
    </lineage>
</organism>